<accession>Q8YN49</accession>
<dbReference type="EC" id="3.5.4.16"/>
<dbReference type="EMBL" id="BA000019">
    <property type="protein sequence ID" value="BAB76420.1"/>
    <property type="molecule type" value="Genomic_DNA"/>
</dbReference>
<dbReference type="PIR" id="AI2395">
    <property type="entry name" value="AI2395"/>
</dbReference>
<dbReference type="SMR" id="Q8YN49"/>
<dbReference type="STRING" id="103690.gene:10496774"/>
<dbReference type="KEGG" id="ana:all4721"/>
<dbReference type="eggNOG" id="COG0302">
    <property type="taxonomic scope" value="Bacteria"/>
</dbReference>
<dbReference type="OrthoDB" id="9801207at2"/>
<dbReference type="UniPathway" id="UPA00848">
    <property type="reaction ID" value="UER00151"/>
</dbReference>
<dbReference type="Proteomes" id="UP000002483">
    <property type="component" value="Chromosome"/>
</dbReference>
<dbReference type="GO" id="GO:0005737">
    <property type="term" value="C:cytoplasm"/>
    <property type="evidence" value="ECO:0007669"/>
    <property type="project" value="TreeGrafter"/>
</dbReference>
<dbReference type="GO" id="GO:0005525">
    <property type="term" value="F:GTP binding"/>
    <property type="evidence" value="ECO:0007669"/>
    <property type="project" value="UniProtKB-KW"/>
</dbReference>
<dbReference type="GO" id="GO:0003934">
    <property type="term" value="F:GTP cyclohydrolase I activity"/>
    <property type="evidence" value="ECO:0007669"/>
    <property type="project" value="UniProtKB-UniRule"/>
</dbReference>
<dbReference type="GO" id="GO:0008270">
    <property type="term" value="F:zinc ion binding"/>
    <property type="evidence" value="ECO:0007669"/>
    <property type="project" value="UniProtKB-UniRule"/>
</dbReference>
<dbReference type="GO" id="GO:0006730">
    <property type="term" value="P:one-carbon metabolic process"/>
    <property type="evidence" value="ECO:0007669"/>
    <property type="project" value="UniProtKB-UniRule"/>
</dbReference>
<dbReference type="GO" id="GO:0006729">
    <property type="term" value="P:tetrahydrobiopterin biosynthetic process"/>
    <property type="evidence" value="ECO:0007669"/>
    <property type="project" value="TreeGrafter"/>
</dbReference>
<dbReference type="GO" id="GO:0046654">
    <property type="term" value="P:tetrahydrofolate biosynthetic process"/>
    <property type="evidence" value="ECO:0007669"/>
    <property type="project" value="UniProtKB-UniRule"/>
</dbReference>
<dbReference type="CDD" id="cd00642">
    <property type="entry name" value="GTP_cyclohydro1"/>
    <property type="match status" value="1"/>
</dbReference>
<dbReference type="FunFam" id="3.30.1130.10:FF:000001">
    <property type="entry name" value="GTP cyclohydrolase 1"/>
    <property type="match status" value="1"/>
</dbReference>
<dbReference type="Gene3D" id="1.10.286.10">
    <property type="match status" value="1"/>
</dbReference>
<dbReference type="Gene3D" id="3.30.1130.10">
    <property type="match status" value="1"/>
</dbReference>
<dbReference type="HAMAP" id="MF_00223">
    <property type="entry name" value="FolE"/>
    <property type="match status" value="1"/>
</dbReference>
<dbReference type="InterPro" id="IPR043133">
    <property type="entry name" value="GTP-CH-I_C/QueF"/>
</dbReference>
<dbReference type="InterPro" id="IPR043134">
    <property type="entry name" value="GTP-CH-I_N"/>
</dbReference>
<dbReference type="InterPro" id="IPR001474">
    <property type="entry name" value="GTP_CycHdrlase_I"/>
</dbReference>
<dbReference type="InterPro" id="IPR018234">
    <property type="entry name" value="GTP_CycHdrlase_I_CS"/>
</dbReference>
<dbReference type="InterPro" id="IPR020602">
    <property type="entry name" value="GTP_CycHdrlase_I_dom"/>
</dbReference>
<dbReference type="NCBIfam" id="TIGR00063">
    <property type="entry name" value="folE"/>
    <property type="match status" value="1"/>
</dbReference>
<dbReference type="NCBIfam" id="NF006825">
    <property type="entry name" value="PRK09347.1-2"/>
    <property type="match status" value="1"/>
</dbReference>
<dbReference type="NCBIfam" id="NF006826">
    <property type="entry name" value="PRK09347.1-3"/>
    <property type="match status" value="1"/>
</dbReference>
<dbReference type="PANTHER" id="PTHR11109:SF7">
    <property type="entry name" value="GTP CYCLOHYDROLASE 1"/>
    <property type="match status" value="1"/>
</dbReference>
<dbReference type="PANTHER" id="PTHR11109">
    <property type="entry name" value="GTP CYCLOHYDROLASE I"/>
    <property type="match status" value="1"/>
</dbReference>
<dbReference type="Pfam" id="PF01227">
    <property type="entry name" value="GTP_cyclohydroI"/>
    <property type="match status" value="1"/>
</dbReference>
<dbReference type="SUPFAM" id="SSF55620">
    <property type="entry name" value="Tetrahydrobiopterin biosynthesis enzymes-like"/>
    <property type="match status" value="1"/>
</dbReference>
<dbReference type="PROSITE" id="PS00859">
    <property type="entry name" value="GTP_CYCLOHYDROL_1_1"/>
    <property type="match status" value="1"/>
</dbReference>
<dbReference type="PROSITE" id="PS00860">
    <property type="entry name" value="GTP_CYCLOHYDROL_1_2"/>
    <property type="match status" value="1"/>
</dbReference>
<reference key="1">
    <citation type="journal article" date="2001" name="DNA Res.">
        <title>Complete genomic sequence of the filamentous nitrogen-fixing cyanobacterium Anabaena sp. strain PCC 7120.</title>
        <authorList>
            <person name="Kaneko T."/>
            <person name="Nakamura Y."/>
            <person name="Wolk C.P."/>
            <person name="Kuritz T."/>
            <person name="Sasamoto S."/>
            <person name="Watanabe A."/>
            <person name="Iriguchi M."/>
            <person name="Ishikawa A."/>
            <person name="Kawashima K."/>
            <person name="Kimura T."/>
            <person name="Kishida Y."/>
            <person name="Kohara M."/>
            <person name="Matsumoto M."/>
            <person name="Matsuno A."/>
            <person name="Muraki A."/>
            <person name="Nakazaki N."/>
            <person name="Shimpo S."/>
            <person name="Sugimoto M."/>
            <person name="Takazawa M."/>
            <person name="Yamada M."/>
            <person name="Yasuda M."/>
            <person name="Tabata S."/>
        </authorList>
    </citation>
    <scope>NUCLEOTIDE SEQUENCE [LARGE SCALE GENOMIC DNA]</scope>
    <source>
        <strain>PCC 7120 / SAG 25.82 / UTEX 2576</strain>
    </source>
</reference>
<feature type="chain" id="PRO_0000119380" description="GTP cyclohydrolase 1 2">
    <location>
        <begin position="1"/>
        <end position="216"/>
    </location>
</feature>
<proteinExistence type="inferred from homology"/>
<comment type="catalytic activity">
    <reaction>
        <text>GTP + H2O = 7,8-dihydroneopterin 3'-triphosphate + formate + H(+)</text>
        <dbReference type="Rhea" id="RHEA:17473"/>
        <dbReference type="ChEBI" id="CHEBI:15377"/>
        <dbReference type="ChEBI" id="CHEBI:15378"/>
        <dbReference type="ChEBI" id="CHEBI:15740"/>
        <dbReference type="ChEBI" id="CHEBI:37565"/>
        <dbReference type="ChEBI" id="CHEBI:58462"/>
        <dbReference type="EC" id="3.5.4.16"/>
    </reaction>
</comment>
<comment type="pathway">
    <text>Cofactor biosynthesis; 7,8-dihydroneopterin triphosphate biosynthesis; 7,8-dihydroneopterin triphosphate from GTP: step 1/1.</text>
</comment>
<comment type="subunit">
    <text evidence="1">Homomer.</text>
</comment>
<comment type="similarity">
    <text evidence="2">Belongs to the GTP cyclohydrolase I family.</text>
</comment>
<gene>
    <name type="primary">folE2</name>
    <name type="ordered locus">all4721</name>
</gene>
<protein>
    <recommendedName>
        <fullName>GTP cyclohydrolase 1 2</fullName>
        <ecNumber>3.5.4.16</ecNumber>
    </recommendedName>
    <alternativeName>
        <fullName>GTP cyclohydrolase I 2</fullName>
        <shortName>GTP-CH-I 2</shortName>
    </alternativeName>
</protein>
<name>GCH12_NOSS1</name>
<evidence type="ECO:0000250" key="1"/>
<evidence type="ECO:0000305" key="2"/>
<keyword id="KW-0342">GTP-binding</keyword>
<keyword id="KW-0378">Hydrolase</keyword>
<keyword id="KW-0547">Nucleotide-binding</keyword>
<keyword id="KW-0554">One-carbon metabolism</keyword>
<keyword id="KW-1185">Reference proteome</keyword>
<organism>
    <name type="scientific">Nostoc sp. (strain PCC 7120 / SAG 25.82 / UTEX 2576)</name>
    <dbReference type="NCBI Taxonomy" id="103690"/>
    <lineage>
        <taxon>Bacteria</taxon>
        <taxon>Bacillati</taxon>
        <taxon>Cyanobacteriota</taxon>
        <taxon>Cyanophyceae</taxon>
        <taxon>Nostocales</taxon>
        <taxon>Nostocaceae</taxon>
        <taxon>Nostoc</taxon>
    </lineage>
</organism>
<sequence length="216" mass="23942">MTLSIRPDTVSAAQMVSSLSTQQTPTVTEAEMVQAVRTLLIGLGENPDREGLLDTPKRVVKALQFLTKGYNESLDELLNGAVFTEDANEMVLIRDIDIFSSCEHHILPIIGRAHVAYIPNGKVIGLSKIARVCEMYARRLQVQERLTLQIADALQGLLKPQGVAVVIEATHMCMVMRGVQKPGSWTVTSAMRGVFAEDARTREEFMNLVRHNANFH</sequence>